<reference key="1">
    <citation type="journal article" date="2003" name="Science">
        <title>A genomic view of the human-Bacteroides thetaiotaomicron symbiosis.</title>
        <authorList>
            <person name="Xu J."/>
            <person name="Bjursell M.K."/>
            <person name="Himrod J."/>
            <person name="Deng S."/>
            <person name="Carmichael L.K."/>
            <person name="Chiang H.C."/>
            <person name="Hooper L.V."/>
            <person name="Gordon J.I."/>
        </authorList>
    </citation>
    <scope>NUCLEOTIDE SEQUENCE [LARGE SCALE GENOMIC DNA]</scope>
    <source>
        <strain>ATCC 29148 / DSM 2079 / JCM 5827 / CCUG 10774 / NCTC 10582 / VPI-5482 / E50</strain>
    </source>
</reference>
<proteinExistence type="evidence at protein level"/>
<keyword id="KW-0002">3D-structure</keyword>
<keyword id="KW-0119">Carbohydrate metabolism</keyword>
<keyword id="KW-0963">Cytoplasm</keyword>
<keyword id="KW-0413">Isomerase</keyword>
<keyword id="KW-0460">Magnesium</keyword>
<keyword id="KW-0479">Metal-binding</keyword>
<keyword id="KW-1185">Reference proteome</keyword>
<keyword id="KW-0859">Xylose metabolism</keyword>
<feature type="chain" id="PRO_0000195768" description="Xylose isomerase">
    <location>
        <begin position="1"/>
        <end position="438"/>
    </location>
</feature>
<feature type="active site" evidence="1">
    <location>
        <position position="103"/>
    </location>
</feature>
<feature type="active site" evidence="1">
    <location>
        <position position="106"/>
    </location>
</feature>
<feature type="binding site" evidence="1">
    <location>
        <position position="234"/>
    </location>
    <ligand>
        <name>Mg(2+)</name>
        <dbReference type="ChEBI" id="CHEBI:18420"/>
        <label>1</label>
    </ligand>
</feature>
<feature type="binding site" evidence="1">
    <location>
        <position position="270"/>
    </location>
    <ligand>
        <name>Mg(2+)</name>
        <dbReference type="ChEBI" id="CHEBI:18420"/>
        <label>1</label>
    </ligand>
</feature>
<feature type="binding site" evidence="1">
    <location>
        <position position="270"/>
    </location>
    <ligand>
        <name>Mg(2+)</name>
        <dbReference type="ChEBI" id="CHEBI:18420"/>
        <label>2</label>
    </ligand>
</feature>
<feature type="binding site" evidence="1">
    <location>
        <position position="273"/>
    </location>
    <ligand>
        <name>Mg(2+)</name>
        <dbReference type="ChEBI" id="CHEBI:18420"/>
        <label>2</label>
    </ligand>
</feature>
<feature type="binding site" evidence="1">
    <location>
        <position position="298"/>
    </location>
    <ligand>
        <name>Mg(2+)</name>
        <dbReference type="ChEBI" id="CHEBI:18420"/>
        <label>1</label>
    </ligand>
</feature>
<feature type="binding site" evidence="1">
    <location>
        <position position="309"/>
    </location>
    <ligand>
        <name>Mg(2+)</name>
        <dbReference type="ChEBI" id="CHEBI:18420"/>
        <label>2</label>
    </ligand>
</feature>
<feature type="binding site" evidence="1">
    <location>
        <position position="311"/>
    </location>
    <ligand>
        <name>Mg(2+)</name>
        <dbReference type="ChEBI" id="CHEBI:18420"/>
        <label>2</label>
    </ligand>
</feature>
<feature type="binding site" evidence="1">
    <location>
        <position position="341"/>
    </location>
    <ligand>
        <name>Mg(2+)</name>
        <dbReference type="ChEBI" id="CHEBI:18420"/>
        <label>1</label>
    </ligand>
</feature>
<feature type="strand" evidence="2">
    <location>
        <begin position="25"/>
        <end position="28"/>
    </location>
</feature>
<feature type="helix" evidence="2">
    <location>
        <begin position="40"/>
        <end position="44"/>
    </location>
</feature>
<feature type="strand" evidence="2">
    <location>
        <begin position="46"/>
        <end position="49"/>
    </location>
</feature>
<feature type="helix" evidence="2">
    <location>
        <begin position="50"/>
        <end position="54"/>
    </location>
</feature>
<feature type="helix" evidence="2">
    <location>
        <begin position="77"/>
        <end position="95"/>
    </location>
</feature>
<feature type="strand" evidence="2">
    <location>
        <begin position="99"/>
        <end position="103"/>
    </location>
</feature>
<feature type="helix" evidence="2">
    <location>
        <begin position="104"/>
        <end position="107"/>
    </location>
</feature>
<feature type="helix" evidence="2">
    <location>
        <begin position="114"/>
        <end position="135"/>
    </location>
</feature>
<feature type="strand" evidence="2">
    <location>
        <begin position="138"/>
        <end position="143"/>
    </location>
</feature>
<feature type="strand" evidence="2">
    <location>
        <begin position="147"/>
        <end position="149"/>
    </location>
</feature>
<feature type="helix" evidence="2">
    <location>
        <begin position="150"/>
        <end position="152"/>
    </location>
</feature>
<feature type="helix" evidence="2">
    <location>
        <begin position="162"/>
        <end position="181"/>
    </location>
</feature>
<feature type="strand" evidence="2">
    <location>
        <begin position="185"/>
        <end position="189"/>
    </location>
</feature>
<feature type="strand" evidence="2">
    <location>
        <begin position="194"/>
        <end position="197"/>
    </location>
</feature>
<feature type="helix" evidence="2">
    <location>
        <begin position="204"/>
        <end position="224"/>
    </location>
</feature>
<feature type="strand" evidence="2">
    <location>
        <begin position="229"/>
        <end position="233"/>
    </location>
</feature>
<feature type="strand" evidence="2">
    <location>
        <begin position="239"/>
        <end position="246"/>
    </location>
</feature>
<feature type="helix" evidence="2">
    <location>
        <begin position="249"/>
        <end position="258"/>
    </location>
</feature>
<feature type="turn" evidence="2">
    <location>
        <begin position="262"/>
        <end position="264"/>
    </location>
</feature>
<feature type="strand" evidence="2">
    <location>
        <begin position="265"/>
        <end position="270"/>
    </location>
</feature>
<feature type="helix" evidence="2">
    <location>
        <begin position="271"/>
        <end position="276"/>
    </location>
</feature>
<feature type="helix" evidence="2">
    <location>
        <begin position="281"/>
        <end position="290"/>
    </location>
</feature>
<feature type="strand" evidence="2">
    <location>
        <begin position="294"/>
        <end position="298"/>
    </location>
</feature>
<feature type="helix" evidence="2">
    <location>
        <begin position="317"/>
        <end position="329"/>
    </location>
</feature>
<feature type="strand" evidence="2">
    <location>
        <begin position="338"/>
        <end position="340"/>
    </location>
</feature>
<feature type="helix" evidence="2">
    <location>
        <begin position="352"/>
        <end position="378"/>
    </location>
</feature>
<feature type="helix" evidence="2">
    <location>
        <begin position="381"/>
        <end position="388"/>
    </location>
</feature>
<feature type="helix" evidence="2">
    <location>
        <begin position="389"/>
        <end position="392"/>
    </location>
</feature>
<feature type="helix" evidence="2">
    <location>
        <begin position="395"/>
        <end position="401"/>
    </location>
</feature>
<feature type="helix" evidence="2">
    <location>
        <begin position="407"/>
        <end position="414"/>
    </location>
</feature>
<feature type="helix" evidence="2">
    <location>
        <begin position="427"/>
        <end position="435"/>
    </location>
</feature>
<comment type="catalytic activity">
    <reaction evidence="1">
        <text>alpha-D-xylose = alpha-D-xylulofuranose</text>
        <dbReference type="Rhea" id="RHEA:22816"/>
        <dbReference type="ChEBI" id="CHEBI:28518"/>
        <dbReference type="ChEBI" id="CHEBI:188998"/>
        <dbReference type="EC" id="5.3.1.5"/>
    </reaction>
</comment>
<comment type="cofactor">
    <cofactor evidence="1">
        <name>Mg(2+)</name>
        <dbReference type="ChEBI" id="CHEBI:18420"/>
    </cofactor>
    <text evidence="1">Binds 2 magnesium ions per subunit.</text>
</comment>
<comment type="subunit">
    <text evidence="1">Homotetramer.</text>
</comment>
<comment type="subcellular location">
    <subcellularLocation>
        <location evidence="1">Cytoplasm</location>
    </subcellularLocation>
</comment>
<comment type="similarity">
    <text evidence="1">Belongs to the xylose isomerase family.</text>
</comment>
<organism>
    <name type="scientific">Bacteroides thetaiotaomicron (strain ATCC 29148 / DSM 2079 / JCM 5827 / CCUG 10774 / NCTC 10582 / VPI-5482 / E50)</name>
    <dbReference type="NCBI Taxonomy" id="226186"/>
    <lineage>
        <taxon>Bacteria</taxon>
        <taxon>Pseudomonadati</taxon>
        <taxon>Bacteroidota</taxon>
        <taxon>Bacteroidia</taxon>
        <taxon>Bacteroidales</taxon>
        <taxon>Bacteroidaceae</taxon>
        <taxon>Bacteroides</taxon>
    </lineage>
</organism>
<name>XYLA_BACTN</name>
<dbReference type="EC" id="5.3.1.5" evidence="1"/>
<dbReference type="EMBL" id="AE015928">
    <property type="protein sequence ID" value="AAO75900.1"/>
    <property type="molecule type" value="Genomic_DNA"/>
</dbReference>
<dbReference type="RefSeq" id="NP_809706.1">
    <property type="nucleotide sequence ID" value="NC_004663.1"/>
</dbReference>
<dbReference type="RefSeq" id="WP_011107447.1">
    <property type="nucleotide sequence ID" value="NC_004663.1"/>
</dbReference>
<dbReference type="PDB" id="4XKM">
    <property type="method" value="X-ray"/>
    <property type="resolution" value="2.10 A"/>
    <property type="chains" value="A/B/C/D/E/F/G/H=1-438"/>
</dbReference>
<dbReference type="PDBsum" id="4XKM"/>
<dbReference type="SASBDB" id="Q8A9M2"/>
<dbReference type="SMR" id="Q8A9M2"/>
<dbReference type="FunCoup" id="Q8A9M2">
    <property type="interactions" value="231"/>
</dbReference>
<dbReference type="STRING" id="226186.BT_0793"/>
<dbReference type="PaxDb" id="226186-BT_0793"/>
<dbReference type="EnsemblBacteria" id="AAO75900">
    <property type="protein sequence ID" value="AAO75900"/>
    <property type="gene ID" value="BT_0793"/>
</dbReference>
<dbReference type="GeneID" id="60926762"/>
<dbReference type="KEGG" id="bth:BT_0793"/>
<dbReference type="PATRIC" id="fig|226186.12.peg.811"/>
<dbReference type="eggNOG" id="COG2115">
    <property type="taxonomic scope" value="Bacteria"/>
</dbReference>
<dbReference type="HOGENOM" id="CLU_037261_1_0_10"/>
<dbReference type="InParanoid" id="Q8A9M2"/>
<dbReference type="OrthoDB" id="9763981at2"/>
<dbReference type="BRENDA" id="5.3.1.5">
    <property type="organism ID" value="709"/>
</dbReference>
<dbReference type="Proteomes" id="UP000001414">
    <property type="component" value="Chromosome"/>
</dbReference>
<dbReference type="GO" id="GO:0005737">
    <property type="term" value="C:cytoplasm"/>
    <property type="evidence" value="ECO:0007669"/>
    <property type="project" value="UniProtKB-SubCell"/>
</dbReference>
<dbReference type="GO" id="GO:0000287">
    <property type="term" value="F:magnesium ion binding"/>
    <property type="evidence" value="ECO:0007669"/>
    <property type="project" value="UniProtKB-UniRule"/>
</dbReference>
<dbReference type="GO" id="GO:0009045">
    <property type="term" value="F:xylose isomerase activity"/>
    <property type="evidence" value="ECO:0000318"/>
    <property type="project" value="GO_Central"/>
</dbReference>
<dbReference type="GO" id="GO:0042843">
    <property type="term" value="P:D-xylose catabolic process"/>
    <property type="evidence" value="ECO:0000318"/>
    <property type="project" value="GO_Central"/>
</dbReference>
<dbReference type="FunFam" id="3.20.20.150:FF:000002">
    <property type="entry name" value="Xylose isomerase"/>
    <property type="match status" value="1"/>
</dbReference>
<dbReference type="Gene3D" id="3.20.20.150">
    <property type="entry name" value="Divalent-metal-dependent TIM barrel enzymes"/>
    <property type="match status" value="1"/>
</dbReference>
<dbReference type="HAMAP" id="MF_00455">
    <property type="entry name" value="Xylose_isom_A"/>
    <property type="match status" value="1"/>
</dbReference>
<dbReference type="InterPro" id="IPR036237">
    <property type="entry name" value="Xyl_isomerase-like_sf"/>
</dbReference>
<dbReference type="InterPro" id="IPR013022">
    <property type="entry name" value="Xyl_isomerase-like_TIM-brl"/>
</dbReference>
<dbReference type="InterPro" id="IPR013452">
    <property type="entry name" value="Xylose_isom_bac"/>
</dbReference>
<dbReference type="InterPro" id="IPR001998">
    <property type="entry name" value="Xylose_isomerase"/>
</dbReference>
<dbReference type="NCBIfam" id="NF003998">
    <property type="entry name" value="PRK05474.1"/>
    <property type="match status" value="1"/>
</dbReference>
<dbReference type="NCBIfam" id="TIGR02630">
    <property type="entry name" value="xylose_isom_A"/>
    <property type="match status" value="1"/>
</dbReference>
<dbReference type="PANTHER" id="PTHR48408">
    <property type="match status" value="1"/>
</dbReference>
<dbReference type="PANTHER" id="PTHR48408:SF1">
    <property type="entry name" value="XYLOSE ISOMERASE"/>
    <property type="match status" value="1"/>
</dbReference>
<dbReference type="Pfam" id="PF01261">
    <property type="entry name" value="AP_endonuc_2"/>
    <property type="match status" value="1"/>
</dbReference>
<dbReference type="PRINTS" id="PR00688">
    <property type="entry name" value="XYLOSISMRASE"/>
</dbReference>
<dbReference type="SUPFAM" id="SSF51658">
    <property type="entry name" value="Xylose isomerase-like"/>
    <property type="match status" value="1"/>
</dbReference>
<dbReference type="PROSITE" id="PS51415">
    <property type="entry name" value="XYLOSE_ISOMERASE"/>
    <property type="match status" value="1"/>
</dbReference>
<protein>
    <recommendedName>
        <fullName evidence="1">Xylose isomerase</fullName>
        <ecNumber evidence="1">5.3.1.5</ecNumber>
    </recommendedName>
</protein>
<sequence length="438" mass="48938">MATKEFFPGIEKIKFEGKDSKNPMAFRYYDAEKVINGKKMKDWLRFAMAWWHTLCAEGGDQFGGGTKQFPWNGNADAIQAAKDKMDAGFEFMQKMGIEYYCFHDVDLVSEGASVEEYEANLKEIVAYAKQKQAETGIKLLWGTANVFGHARYMNGAATNPDFDVVARAAVQIKNAIDATIELGGENYVFWGGREGYMSLLNTDQKREKEHLAQMLTIARDYARARGFKGTFLIEPKPMEPTKHQYDVDTETVIGFLKAHGLDKDFKVNIEVNHATLAGHTFEHELAVAVDNGMLGSIDANRGDYQNGWDTDQFPIDNYELTQAMMQIIRNGGLGTGGTNFDAKTRRNSTDLEDIFIAHIAGMDAMARALESAAALLDESPYKKMLADRYASFDGGKGKEFEDGKLTLEDVVAYAKTKGEPKQTSGKQELYEAILNMYC</sequence>
<accession>Q8A9M2</accession>
<gene>
    <name evidence="1" type="primary">xylA</name>
    <name type="ordered locus">BT_0793</name>
</gene>
<evidence type="ECO:0000255" key="1">
    <source>
        <dbReference type="HAMAP-Rule" id="MF_00455"/>
    </source>
</evidence>
<evidence type="ECO:0007829" key="2">
    <source>
        <dbReference type="PDB" id="4XKM"/>
    </source>
</evidence>